<name>PANB_BRUME</name>
<gene>
    <name evidence="1" type="primary">panB</name>
    <name type="ordered locus">BMEI1592</name>
</gene>
<comment type="function">
    <text evidence="1">Catalyzes the reversible reaction in which hydroxymethyl group from 5,10-methylenetetrahydrofolate is transferred onto alpha-ketoisovalerate to form ketopantoate.</text>
</comment>
<comment type="catalytic activity">
    <reaction evidence="1">
        <text>3-methyl-2-oxobutanoate + (6R)-5,10-methylene-5,6,7,8-tetrahydrofolate + H2O = 2-dehydropantoate + (6S)-5,6,7,8-tetrahydrofolate</text>
        <dbReference type="Rhea" id="RHEA:11824"/>
        <dbReference type="ChEBI" id="CHEBI:11561"/>
        <dbReference type="ChEBI" id="CHEBI:11851"/>
        <dbReference type="ChEBI" id="CHEBI:15377"/>
        <dbReference type="ChEBI" id="CHEBI:15636"/>
        <dbReference type="ChEBI" id="CHEBI:57453"/>
        <dbReference type="EC" id="2.1.2.11"/>
    </reaction>
</comment>
<comment type="cofactor">
    <cofactor evidence="1">
        <name>Mg(2+)</name>
        <dbReference type="ChEBI" id="CHEBI:18420"/>
    </cofactor>
    <text evidence="1">Binds 1 Mg(2+) ion per subunit.</text>
</comment>
<comment type="pathway">
    <text evidence="1">Cofactor biosynthesis; (R)-pantothenate biosynthesis; (R)-pantoate from 3-methyl-2-oxobutanoate: step 1/2.</text>
</comment>
<comment type="subunit">
    <text evidence="1">Homodecamer; pentamer of dimers.</text>
</comment>
<comment type="subcellular location">
    <subcellularLocation>
        <location evidence="1">Cytoplasm</location>
    </subcellularLocation>
</comment>
<comment type="similarity">
    <text evidence="1">Belongs to the PanB family.</text>
</comment>
<comment type="sequence caution" evidence="2">
    <conflict type="erroneous initiation">
        <sequence resource="EMBL-CDS" id="AAL52773"/>
    </conflict>
</comment>
<dbReference type="EC" id="2.1.2.11" evidence="1"/>
<dbReference type="EMBL" id="AE008917">
    <property type="protein sequence ID" value="AAL52773.1"/>
    <property type="status" value="ALT_INIT"/>
    <property type="molecule type" value="Genomic_DNA"/>
</dbReference>
<dbReference type="PIR" id="AB3451">
    <property type="entry name" value="AB3451"/>
</dbReference>
<dbReference type="RefSeq" id="WP_002963495.1">
    <property type="nucleotide sequence ID" value="NZ_GG703778.1"/>
</dbReference>
<dbReference type="SMR" id="P65654"/>
<dbReference type="GeneID" id="97534281"/>
<dbReference type="KEGG" id="bme:BMEI1592"/>
<dbReference type="KEGG" id="bmel:DK63_1898"/>
<dbReference type="PATRIC" id="fig|224914.52.peg.1998"/>
<dbReference type="eggNOG" id="COG0413">
    <property type="taxonomic scope" value="Bacteria"/>
</dbReference>
<dbReference type="PhylomeDB" id="P65654"/>
<dbReference type="UniPathway" id="UPA00028">
    <property type="reaction ID" value="UER00003"/>
</dbReference>
<dbReference type="Proteomes" id="UP000000419">
    <property type="component" value="Chromosome I"/>
</dbReference>
<dbReference type="GO" id="GO:0005737">
    <property type="term" value="C:cytoplasm"/>
    <property type="evidence" value="ECO:0007669"/>
    <property type="project" value="UniProtKB-SubCell"/>
</dbReference>
<dbReference type="GO" id="GO:0003864">
    <property type="term" value="F:3-methyl-2-oxobutanoate hydroxymethyltransferase activity"/>
    <property type="evidence" value="ECO:0007669"/>
    <property type="project" value="UniProtKB-UniRule"/>
</dbReference>
<dbReference type="GO" id="GO:0000287">
    <property type="term" value="F:magnesium ion binding"/>
    <property type="evidence" value="ECO:0007669"/>
    <property type="project" value="TreeGrafter"/>
</dbReference>
<dbReference type="GO" id="GO:0015940">
    <property type="term" value="P:pantothenate biosynthetic process"/>
    <property type="evidence" value="ECO:0007669"/>
    <property type="project" value="UniProtKB-UniRule"/>
</dbReference>
<dbReference type="CDD" id="cd06557">
    <property type="entry name" value="KPHMT-like"/>
    <property type="match status" value="1"/>
</dbReference>
<dbReference type="FunFam" id="3.20.20.60:FF:000003">
    <property type="entry name" value="3-methyl-2-oxobutanoate hydroxymethyltransferase"/>
    <property type="match status" value="1"/>
</dbReference>
<dbReference type="Gene3D" id="3.20.20.60">
    <property type="entry name" value="Phosphoenolpyruvate-binding domains"/>
    <property type="match status" value="1"/>
</dbReference>
<dbReference type="HAMAP" id="MF_00156">
    <property type="entry name" value="PanB"/>
    <property type="match status" value="1"/>
</dbReference>
<dbReference type="InterPro" id="IPR003700">
    <property type="entry name" value="Pantoate_hydroxy_MeTrfase"/>
</dbReference>
<dbReference type="InterPro" id="IPR015813">
    <property type="entry name" value="Pyrv/PenolPyrv_kinase-like_dom"/>
</dbReference>
<dbReference type="InterPro" id="IPR040442">
    <property type="entry name" value="Pyrv_kinase-like_dom_sf"/>
</dbReference>
<dbReference type="NCBIfam" id="TIGR00222">
    <property type="entry name" value="panB"/>
    <property type="match status" value="1"/>
</dbReference>
<dbReference type="NCBIfam" id="NF001452">
    <property type="entry name" value="PRK00311.1"/>
    <property type="match status" value="1"/>
</dbReference>
<dbReference type="PANTHER" id="PTHR20881">
    <property type="entry name" value="3-METHYL-2-OXOBUTANOATE HYDROXYMETHYLTRANSFERASE"/>
    <property type="match status" value="1"/>
</dbReference>
<dbReference type="PANTHER" id="PTHR20881:SF0">
    <property type="entry name" value="3-METHYL-2-OXOBUTANOATE HYDROXYMETHYLTRANSFERASE"/>
    <property type="match status" value="1"/>
</dbReference>
<dbReference type="Pfam" id="PF02548">
    <property type="entry name" value="Pantoate_transf"/>
    <property type="match status" value="1"/>
</dbReference>
<dbReference type="PIRSF" id="PIRSF000388">
    <property type="entry name" value="Pantoate_hydroxy_MeTrfase"/>
    <property type="match status" value="1"/>
</dbReference>
<dbReference type="SUPFAM" id="SSF51621">
    <property type="entry name" value="Phosphoenolpyruvate/pyruvate domain"/>
    <property type="match status" value="1"/>
</dbReference>
<protein>
    <recommendedName>
        <fullName evidence="1">3-methyl-2-oxobutanoate hydroxymethyltransferase</fullName>
        <ecNumber evidence="1">2.1.2.11</ecNumber>
    </recommendedName>
    <alternativeName>
        <fullName evidence="1">Ketopantoate hydroxymethyltransferase</fullName>
        <shortName evidence="1">KPHMT</shortName>
    </alternativeName>
</protein>
<keyword id="KW-0963">Cytoplasm</keyword>
<keyword id="KW-0460">Magnesium</keyword>
<keyword id="KW-0479">Metal-binding</keyword>
<keyword id="KW-0566">Pantothenate biosynthesis</keyword>
<keyword id="KW-0808">Transferase</keyword>
<proteinExistence type="inferred from homology"/>
<evidence type="ECO:0000255" key="1">
    <source>
        <dbReference type="HAMAP-Rule" id="MF_00156"/>
    </source>
</evidence>
<evidence type="ECO:0000305" key="2"/>
<sequence>MSAPVTRKRLTPKVIQAMKGECPIVSLTAYTTPVARLLDPHCDLLLVGDSLGMVLYGMESTLAVTLDMMIMHGQAVMRGTSHACVIVDMPFGSYQESKEQAFRNAARVMQETGCDGVKLEGGEEMAETVAFLVRRGIPVFGHVGLMPQQVNTVGGFRSLGRGDDEAGKIRRDAQAIAQAGAFAVVIEGTVEPLAREITALIDIPTVGIGASSACDGQVLVSDDMLGLFQDFTPRFVKRFAHLAPQVSQAAEAYAEEVRARRFPGPEHVFGAKPGA</sequence>
<reference key="1">
    <citation type="journal article" date="2002" name="Proc. Natl. Acad. Sci. U.S.A.">
        <title>The genome sequence of the facultative intracellular pathogen Brucella melitensis.</title>
        <authorList>
            <person name="DelVecchio V.G."/>
            <person name="Kapatral V."/>
            <person name="Redkar R.J."/>
            <person name="Patra G."/>
            <person name="Mujer C."/>
            <person name="Los T."/>
            <person name="Ivanova N."/>
            <person name="Anderson I."/>
            <person name="Bhattacharyya A."/>
            <person name="Lykidis A."/>
            <person name="Reznik G."/>
            <person name="Jablonski L."/>
            <person name="Larsen N."/>
            <person name="D'Souza M."/>
            <person name="Bernal A."/>
            <person name="Mazur M."/>
            <person name="Goltsman E."/>
            <person name="Selkov E."/>
            <person name="Elzer P.H."/>
            <person name="Hagius S."/>
            <person name="O'Callaghan D."/>
            <person name="Letesson J.-J."/>
            <person name="Haselkorn R."/>
            <person name="Kyrpides N.C."/>
            <person name="Overbeek R."/>
        </authorList>
    </citation>
    <scope>NUCLEOTIDE SEQUENCE [LARGE SCALE GENOMIC DNA]</scope>
    <source>
        <strain>ATCC 23456 / CCUG 17765 / NCTC 10094 / 16M</strain>
    </source>
</reference>
<feature type="chain" id="PRO_0000184826" description="3-methyl-2-oxobutanoate hydroxymethyltransferase">
    <location>
        <begin position="1"/>
        <end position="275"/>
    </location>
</feature>
<feature type="active site" description="Proton acceptor" evidence="1">
    <location>
        <position position="187"/>
    </location>
</feature>
<feature type="binding site" evidence="1">
    <location>
        <begin position="49"/>
        <end position="50"/>
    </location>
    <ligand>
        <name>3-methyl-2-oxobutanoate</name>
        <dbReference type="ChEBI" id="CHEBI:11851"/>
    </ligand>
</feature>
<feature type="binding site" evidence="1">
    <location>
        <position position="49"/>
    </location>
    <ligand>
        <name>Mg(2+)</name>
        <dbReference type="ChEBI" id="CHEBI:18420"/>
    </ligand>
</feature>
<feature type="binding site" evidence="1">
    <location>
        <position position="88"/>
    </location>
    <ligand>
        <name>3-methyl-2-oxobutanoate</name>
        <dbReference type="ChEBI" id="CHEBI:11851"/>
    </ligand>
</feature>
<feature type="binding site" evidence="1">
    <location>
        <position position="88"/>
    </location>
    <ligand>
        <name>Mg(2+)</name>
        <dbReference type="ChEBI" id="CHEBI:18420"/>
    </ligand>
</feature>
<feature type="binding site" evidence="1">
    <location>
        <position position="118"/>
    </location>
    <ligand>
        <name>3-methyl-2-oxobutanoate</name>
        <dbReference type="ChEBI" id="CHEBI:11851"/>
    </ligand>
</feature>
<feature type="binding site" evidence="1">
    <location>
        <position position="120"/>
    </location>
    <ligand>
        <name>Mg(2+)</name>
        <dbReference type="ChEBI" id="CHEBI:18420"/>
    </ligand>
</feature>
<accession>P65654</accession>
<accession>Q8YFD0</accession>
<organism>
    <name type="scientific">Brucella melitensis biotype 1 (strain ATCC 23456 / CCUG 17765 / NCTC 10094 / 16M)</name>
    <dbReference type="NCBI Taxonomy" id="224914"/>
    <lineage>
        <taxon>Bacteria</taxon>
        <taxon>Pseudomonadati</taxon>
        <taxon>Pseudomonadota</taxon>
        <taxon>Alphaproteobacteria</taxon>
        <taxon>Hyphomicrobiales</taxon>
        <taxon>Brucellaceae</taxon>
        <taxon>Brucella/Ochrobactrum group</taxon>
        <taxon>Brucella</taxon>
    </lineage>
</organism>